<evidence type="ECO:0000250" key="1"/>
<evidence type="ECO:0000255" key="2">
    <source>
        <dbReference type="HAMAP-Rule" id="MF_00047"/>
    </source>
</evidence>
<name>DDL_STRZJ</name>
<feature type="chain" id="PRO_1000189748" description="D-alanine--D-alanine ligase">
    <location>
        <begin position="1"/>
        <end position="347"/>
    </location>
</feature>
<feature type="domain" description="ATP-grasp" evidence="2">
    <location>
        <begin position="131"/>
        <end position="333"/>
    </location>
</feature>
<feature type="binding site" evidence="2">
    <location>
        <begin position="161"/>
        <end position="216"/>
    </location>
    <ligand>
        <name>ATP</name>
        <dbReference type="ChEBI" id="CHEBI:30616"/>
    </ligand>
</feature>
<feature type="binding site" evidence="2">
    <location>
        <position position="287"/>
    </location>
    <ligand>
        <name>Mg(2+)</name>
        <dbReference type="ChEBI" id="CHEBI:18420"/>
        <label>1</label>
    </ligand>
</feature>
<feature type="binding site" evidence="2">
    <location>
        <position position="300"/>
    </location>
    <ligand>
        <name>Mg(2+)</name>
        <dbReference type="ChEBI" id="CHEBI:18420"/>
        <label>1</label>
    </ligand>
</feature>
<feature type="binding site" evidence="2">
    <location>
        <position position="300"/>
    </location>
    <ligand>
        <name>Mg(2+)</name>
        <dbReference type="ChEBI" id="CHEBI:18420"/>
        <label>2</label>
    </ligand>
</feature>
<feature type="binding site" evidence="2">
    <location>
        <position position="302"/>
    </location>
    <ligand>
        <name>Mg(2+)</name>
        <dbReference type="ChEBI" id="CHEBI:18420"/>
        <label>2</label>
    </ligand>
</feature>
<dbReference type="EC" id="6.3.2.4" evidence="2"/>
<dbReference type="EMBL" id="CP000919">
    <property type="protein sequence ID" value="ACO20073.1"/>
    <property type="molecule type" value="Genomic_DNA"/>
</dbReference>
<dbReference type="RefSeq" id="WP_000814694.1">
    <property type="nucleotide sequence ID" value="NC_012466.1"/>
</dbReference>
<dbReference type="SMR" id="C1CFP2"/>
<dbReference type="KEGG" id="sjj:SPJ_1566"/>
<dbReference type="HOGENOM" id="CLU_039268_0_0_9"/>
<dbReference type="UniPathway" id="UPA00219"/>
<dbReference type="Proteomes" id="UP000002206">
    <property type="component" value="Chromosome"/>
</dbReference>
<dbReference type="GO" id="GO:0005829">
    <property type="term" value="C:cytosol"/>
    <property type="evidence" value="ECO:0007669"/>
    <property type="project" value="TreeGrafter"/>
</dbReference>
<dbReference type="GO" id="GO:0005524">
    <property type="term" value="F:ATP binding"/>
    <property type="evidence" value="ECO:0007669"/>
    <property type="project" value="UniProtKB-KW"/>
</dbReference>
<dbReference type="GO" id="GO:0008716">
    <property type="term" value="F:D-alanine-D-alanine ligase activity"/>
    <property type="evidence" value="ECO:0007669"/>
    <property type="project" value="UniProtKB-UniRule"/>
</dbReference>
<dbReference type="GO" id="GO:0046872">
    <property type="term" value="F:metal ion binding"/>
    <property type="evidence" value="ECO:0007669"/>
    <property type="project" value="UniProtKB-KW"/>
</dbReference>
<dbReference type="GO" id="GO:0071555">
    <property type="term" value="P:cell wall organization"/>
    <property type="evidence" value="ECO:0007669"/>
    <property type="project" value="UniProtKB-KW"/>
</dbReference>
<dbReference type="GO" id="GO:0009252">
    <property type="term" value="P:peptidoglycan biosynthetic process"/>
    <property type="evidence" value="ECO:0007669"/>
    <property type="project" value="UniProtKB-UniRule"/>
</dbReference>
<dbReference type="GO" id="GO:0008360">
    <property type="term" value="P:regulation of cell shape"/>
    <property type="evidence" value="ECO:0007669"/>
    <property type="project" value="UniProtKB-KW"/>
</dbReference>
<dbReference type="FunFam" id="3.30.1490.20:FF:000007">
    <property type="entry name" value="D-alanine--D-alanine ligase"/>
    <property type="match status" value="1"/>
</dbReference>
<dbReference type="FunFam" id="3.30.470.20:FF:000008">
    <property type="entry name" value="D-alanine--D-alanine ligase"/>
    <property type="match status" value="1"/>
</dbReference>
<dbReference type="FunFam" id="3.40.50.20:FF:000029">
    <property type="entry name" value="D-alanine--D-alanine ligase"/>
    <property type="match status" value="1"/>
</dbReference>
<dbReference type="Gene3D" id="3.40.50.20">
    <property type="match status" value="1"/>
</dbReference>
<dbReference type="Gene3D" id="3.30.1490.20">
    <property type="entry name" value="ATP-grasp fold, A domain"/>
    <property type="match status" value="1"/>
</dbReference>
<dbReference type="Gene3D" id="3.30.470.20">
    <property type="entry name" value="ATP-grasp fold, B domain"/>
    <property type="match status" value="1"/>
</dbReference>
<dbReference type="HAMAP" id="MF_00047">
    <property type="entry name" value="Dala_Dala_lig"/>
    <property type="match status" value="1"/>
</dbReference>
<dbReference type="InterPro" id="IPR011761">
    <property type="entry name" value="ATP-grasp"/>
</dbReference>
<dbReference type="InterPro" id="IPR013815">
    <property type="entry name" value="ATP_grasp_subdomain_1"/>
</dbReference>
<dbReference type="InterPro" id="IPR000291">
    <property type="entry name" value="D-Ala_lig_Van_CS"/>
</dbReference>
<dbReference type="InterPro" id="IPR005905">
    <property type="entry name" value="D_ala_D_ala"/>
</dbReference>
<dbReference type="InterPro" id="IPR011095">
    <property type="entry name" value="Dala_Dala_lig_C"/>
</dbReference>
<dbReference type="InterPro" id="IPR011127">
    <property type="entry name" value="Dala_Dala_lig_N"/>
</dbReference>
<dbReference type="InterPro" id="IPR016185">
    <property type="entry name" value="PreATP-grasp_dom_sf"/>
</dbReference>
<dbReference type="NCBIfam" id="TIGR01205">
    <property type="entry name" value="D_ala_D_alaTIGR"/>
    <property type="match status" value="1"/>
</dbReference>
<dbReference type="NCBIfam" id="NF002528">
    <property type="entry name" value="PRK01966.1-4"/>
    <property type="match status" value="1"/>
</dbReference>
<dbReference type="NCBIfam" id="NF002529">
    <property type="entry name" value="PRK01966.1-5"/>
    <property type="match status" value="1"/>
</dbReference>
<dbReference type="PANTHER" id="PTHR23132">
    <property type="entry name" value="D-ALANINE--D-ALANINE LIGASE"/>
    <property type="match status" value="1"/>
</dbReference>
<dbReference type="PANTHER" id="PTHR23132:SF25">
    <property type="entry name" value="D-ALANINE--D-ALANINE LIGASE A"/>
    <property type="match status" value="1"/>
</dbReference>
<dbReference type="Pfam" id="PF07478">
    <property type="entry name" value="Dala_Dala_lig_C"/>
    <property type="match status" value="1"/>
</dbReference>
<dbReference type="Pfam" id="PF01820">
    <property type="entry name" value="Dala_Dala_lig_N"/>
    <property type="match status" value="1"/>
</dbReference>
<dbReference type="PIRSF" id="PIRSF039102">
    <property type="entry name" value="Ddl/VanB"/>
    <property type="match status" value="1"/>
</dbReference>
<dbReference type="SUPFAM" id="SSF56059">
    <property type="entry name" value="Glutathione synthetase ATP-binding domain-like"/>
    <property type="match status" value="1"/>
</dbReference>
<dbReference type="SUPFAM" id="SSF52440">
    <property type="entry name" value="PreATP-grasp domain"/>
    <property type="match status" value="1"/>
</dbReference>
<dbReference type="PROSITE" id="PS50975">
    <property type="entry name" value="ATP_GRASP"/>
    <property type="match status" value="1"/>
</dbReference>
<dbReference type="PROSITE" id="PS00843">
    <property type="entry name" value="DALA_DALA_LIGASE_1"/>
    <property type="match status" value="1"/>
</dbReference>
<dbReference type="PROSITE" id="PS00844">
    <property type="entry name" value="DALA_DALA_LIGASE_2"/>
    <property type="match status" value="1"/>
</dbReference>
<reference key="1">
    <citation type="journal article" date="2010" name="Genome Biol.">
        <title>Structure and dynamics of the pan-genome of Streptococcus pneumoniae and closely related species.</title>
        <authorList>
            <person name="Donati C."/>
            <person name="Hiller N.L."/>
            <person name="Tettelin H."/>
            <person name="Muzzi A."/>
            <person name="Croucher N.J."/>
            <person name="Angiuoli S.V."/>
            <person name="Oggioni M."/>
            <person name="Dunning Hotopp J.C."/>
            <person name="Hu F.Z."/>
            <person name="Riley D.R."/>
            <person name="Covacci A."/>
            <person name="Mitchell T.J."/>
            <person name="Bentley S.D."/>
            <person name="Kilian M."/>
            <person name="Ehrlich G.D."/>
            <person name="Rappuoli R."/>
            <person name="Moxon E.R."/>
            <person name="Masignani V."/>
        </authorList>
    </citation>
    <scope>NUCLEOTIDE SEQUENCE [LARGE SCALE GENOMIC DNA]</scope>
    <source>
        <strain>JJA</strain>
    </source>
</reference>
<organism>
    <name type="scientific">Streptococcus pneumoniae (strain JJA)</name>
    <dbReference type="NCBI Taxonomy" id="488222"/>
    <lineage>
        <taxon>Bacteria</taxon>
        <taxon>Bacillati</taxon>
        <taxon>Bacillota</taxon>
        <taxon>Bacilli</taxon>
        <taxon>Lactobacillales</taxon>
        <taxon>Streptococcaceae</taxon>
        <taxon>Streptococcus</taxon>
    </lineage>
</organism>
<keyword id="KW-0067">ATP-binding</keyword>
<keyword id="KW-0133">Cell shape</keyword>
<keyword id="KW-0961">Cell wall biogenesis/degradation</keyword>
<keyword id="KW-0963">Cytoplasm</keyword>
<keyword id="KW-0436">Ligase</keyword>
<keyword id="KW-0460">Magnesium</keyword>
<keyword id="KW-0464">Manganese</keyword>
<keyword id="KW-0479">Metal-binding</keyword>
<keyword id="KW-0547">Nucleotide-binding</keyword>
<keyword id="KW-0573">Peptidoglycan synthesis</keyword>
<sequence length="347" mass="38657">MKQTIILLYGGRSAEREVSVLSAESVMRAVNYDRFTVKTFFISQSGDSIKTQEFSHAPGQEDRLMTNETIDWDKKVAPSAIYEEGAVVFPVLHGPMGEDGSVQGFLEVLKMPYVGCNILSSSLAMDKITTKRVLESAGIAQVPYVAIVEGDDVTAKIAEVEEKLAYPVFTKPSNMGSSVGISKSENQEELRQALKLAFRYDSRVLVEQGVNAREIEVGLLGNYDVKSTLPGEVVKDVAFYDYDAKYIDNKVTMDIPAKISDDVVAVMRQNAETAFRAIGGLGLSRCDFFYTDKGEIFLNELNTMPGFTQWSMYPLLWENMGISYPELIERLVDLAKESFDKREAHLI</sequence>
<proteinExistence type="inferred from homology"/>
<comment type="function">
    <text evidence="2">Cell wall formation.</text>
</comment>
<comment type="catalytic activity">
    <reaction evidence="2">
        <text>2 D-alanine + ATP = D-alanyl-D-alanine + ADP + phosphate + H(+)</text>
        <dbReference type="Rhea" id="RHEA:11224"/>
        <dbReference type="ChEBI" id="CHEBI:15378"/>
        <dbReference type="ChEBI" id="CHEBI:30616"/>
        <dbReference type="ChEBI" id="CHEBI:43474"/>
        <dbReference type="ChEBI" id="CHEBI:57416"/>
        <dbReference type="ChEBI" id="CHEBI:57822"/>
        <dbReference type="ChEBI" id="CHEBI:456216"/>
        <dbReference type="EC" id="6.3.2.4"/>
    </reaction>
</comment>
<comment type="cofactor">
    <cofactor evidence="1">
        <name>Mg(2+)</name>
        <dbReference type="ChEBI" id="CHEBI:18420"/>
    </cofactor>
    <cofactor evidence="1">
        <name>Mn(2+)</name>
        <dbReference type="ChEBI" id="CHEBI:29035"/>
    </cofactor>
    <text evidence="1">Binds 2 magnesium or manganese ions per subunit.</text>
</comment>
<comment type="pathway">
    <text evidence="2">Cell wall biogenesis; peptidoglycan biosynthesis.</text>
</comment>
<comment type="subcellular location">
    <subcellularLocation>
        <location evidence="2">Cytoplasm</location>
    </subcellularLocation>
</comment>
<comment type="similarity">
    <text evidence="2">Belongs to the D-alanine--D-alanine ligase family.</text>
</comment>
<gene>
    <name evidence="2" type="primary">ddl</name>
    <name type="ordered locus">SPJ_1566</name>
</gene>
<protein>
    <recommendedName>
        <fullName evidence="2">D-alanine--D-alanine ligase</fullName>
        <ecNumber evidence="2">6.3.2.4</ecNumber>
    </recommendedName>
    <alternativeName>
        <fullName evidence="2">D-Ala-D-Ala ligase</fullName>
    </alternativeName>
    <alternativeName>
        <fullName evidence="2">D-alanylalanine synthetase</fullName>
    </alternativeName>
</protein>
<accession>C1CFP2</accession>